<proteinExistence type="inferred from homology"/>
<gene>
    <name evidence="1" type="primary">serS</name>
    <name type="ordered locus">Mthe_0123</name>
</gene>
<accession>A0B5E9</accession>
<comment type="function">
    <text evidence="1">Catalyzes the attachment of serine to tRNA(Ser). Is also able to aminoacylate tRNA(Sec) with serine, to form the misacylated tRNA L-seryl-tRNA(Sec), which will be further converted into selenocysteinyl-tRNA(Sec).</text>
</comment>
<comment type="catalytic activity">
    <reaction evidence="1">
        <text>tRNA(Ser) + L-serine + ATP = L-seryl-tRNA(Ser) + AMP + diphosphate + H(+)</text>
        <dbReference type="Rhea" id="RHEA:12292"/>
        <dbReference type="Rhea" id="RHEA-COMP:9669"/>
        <dbReference type="Rhea" id="RHEA-COMP:9703"/>
        <dbReference type="ChEBI" id="CHEBI:15378"/>
        <dbReference type="ChEBI" id="CHEBI:30616"/>
        <dbReference type="ChEBI" id="CHEBI:33019"/>
        <dbReference type="ChEBI" id="CHEBI:33384"/>
        <dbReference type="ChEBI" id="CHEBI:78442"/>
        <dbReference type="ChEBI" id="CHEBI:78533"/>
        <dbReference type="ChEBI" id="CHEBI:456215"/>
        <dbReference type="EC" id="6.1.1.11"/>
    </reaction>
</comment>
<comment type="catalytic activity">
    <reaction evidence="1">
        <text>tRNA(Sec) + L-serine + ATP = L-seryl-tRNA(Sec) + AMP + diphosphate + H(+)</text>
        <dbReference type="Rhea" id="RHEA:42580"/>
        <dbReference type="Rhea" id="RHEA-COMP:9742"/>
        <dbReference type="Rhea" id="RHEA-COMP:10128"/>
        <dbReference type="ChEBI" id="CHEBI:15378"/>
        <dbReference type="ChEBI" id="CHEBI:30616"/>
        <dbReference type="ChEBI" id="CHEBI:33019"/>
        <dbReference type="ChEBI" id="CHEBI:33384"/>
        <dbReference type="ChEBI" id="CHEBI:78442"/>
        <dbReference type="ChEBI" id="CHEBI:78533"/>
        <dbReference type="ChEBI" id="CHEBI:456215"/>
        <dbReference type="EC" id="6.1.1.11"/>
    </reaction>
</comment>
<comment type="cofactor">
    <cofactor evidence="1">
        <name>Zn(2+)</name>
        <dbReference type="ChEBI" id="CHEBI:29105"/>
    </cofactor>
    <text evidence="1">Binds 1 Zn(2+) ion per subunit. This ion is coordinated with 2 cysteines, 1 glutamate and a water molecule that dissociates from the zinc ion to allow the coordination of the amino group of the serine substrate, which is essential for catalysis.</text>
</comment>
<comment type="pathway">
    <text evidence="1">Aminoacyl-tRNA biosynthesis; selenocysteinyl-tRNA(Sec) biosynthesis; L-seryl-tRNA(Sec) from L-serine and tRNA(Sec): step 1/1.</text>
</comment>
<comment type="subunit">
    <text evidence="1">Homodimer.</text>
</comment>
<comment type="subcellular location">
    <subcellularLocation>
        <location evidence="1">Cytoplasm</location>
    </subcellularLocation>
</comment>
<comment type="domain">
    <text evidence="1">Consists of two distinct domains, a catalytic core and a N-terminal extension that is presumably involved in tRNA binding.</text>
</comment>
<comment type="similarity">
    <text evidence="1">Belongs to the class-II aminoacyl-tRNA synthetase family. Type-2 seryl-tRNA synthetase subfamily.</text>
</comment>
<keyword id="KW-0030">Aminoacyl-tRNA synthetase</keyword>
<keyword id="KW-0067">ATP-binding</keyword>
<keyword id="KW-0963">Cytoplasm</keyword>
<keyword id="KW-0436">Ligase</keyword>
<keyword id="KW-0479">Metal-binding</keyword>
<keyword id="KW-0547">Nucleotide-binding</keyword>
<keyword id="KW-0648">Protein biosynthesis</keyword>
<keyword id="KW-1185">Reference proteome</keyword>
<keyword id="KW-0862">Zinc</keyword>
<sequence length="500" mass="58083">MKFHLEVSLKLSGDAANAEGDLAEFFEKQAVDLLKKGAPEGMGAKVAGWRITGDQLEIKIESDRYVRAHDALLRLRKPLANLLGRKHRLGIRGINVSRFEIQIESNRQITHRIPYVRESRYEDGLLTLILGVEDPKRGWTWMLENRIPDRIVNLLEEKLQSYGGKAEHWELLWESPPREFKFSGDPTQEMVKRGWIKHGSARGQWIHGPQSTHLFRTFERIVLEEILVPLGYREMIFPKLDTWDVWKRSGHAQGVYPEIYYVCPPKSRDPAFWEEVIDYYKVTHEIPLDLIKEKIDYPIGGMCYAQCPTFWVFLQGATLPNDELPIKVFDRSGTSHRYESGGIHGIERVDEFHRIEIVWLGTKQQVMEEAERLKERYKHIFEEILELRWRMAWVTPWFMAQEGRTGLAEMEGAGTIDYEALLPYSGNWIEFQNLSVNGEKYPKGFSVKAQSGESLWSGCSGVGLERWTSVFLGQKGLDPDNWPDEFRKRFGEMPRGIRFL</sequence>
<evidence type="ECO:0000255" key="1">
    <source>
        <dbReference type="HAMAP-Rule" id="MF_01278"/>
    </source>
</evidence>
<dbReference type="EC" id="6.1.1.11" evidence="1"/>
<dbReference type="EMBL" id="CP000477">
    <property type="protein sequence ID" value="ABK13923.1"/>
    <property type="molecule type" value="Genomic_DNA"/>
</dbReference>
<dbReference type="RefSeq" id="WP_011695322.1">
    <property type="nucleotide sequence ID" value="NC_008553.1"/>
</dbReference>
<dbReference type="SMR" id="A0B5E9"/>
<dbReference type="STRING" id="349307.Mthe_0123"/>
<dbReference type="GeneID" id="4462297"/>
<dbReference type="KEGG" id="mtp:Mthe_0123"/>
<dbReference type="HOGENOM" id="CLU_542524_0_0_2"/>
<dbReference type="OrthoDB" id="115981at2157"/>
<dbReference type="UniPathway" id="UPA00906">
    <property type="reaction ID" value="UER00895"/>
</dbReference>
<dbReference type="Proteomes" id="UP000000674">
    <property type="component" value="Chromosome"/>
</dbReference>
<dbReference type="GO" id="GO:0005737">
    <property type="term" value="C:cytoplasm"/>
    <property type="evidence" value="ECO:0007669"/>
    <property type="project" value="UniProtKB-SubCell"/>
</dbReference>
<dbReference type="GO" id="GO:0005524">
    <property type="term" value="F:ATP binding"/>
    <property type="evidence" value="ECO:0007669"/>
    <property type="project" value="UniProtKB-UniRule"/>
</dbReference>
<dbReference type="GO" id="GO:0004828">
    <property type="term" value="F:serine-tRNA ligase activity"/>
    <property type="evidence" value="ECO:0007669"/>
    <property type="project" value="UniProtKB-UniRule"/>
</dbReference>
<dbReference type="GO" id="GO:0008270">
    <property type="term" value="F:zinc ion binding"/>
    <property type="evidence" value="ECO:0007669"/>
    <property type="project" value="UniProtKB-UniRule"/>
</dbReference>
<dbReference type="GO" id="GO:0016260">
    <property type="term" value="P:selenocysteine biosynthetic process"/>
    <property type="evidence" value="ECO:0007669"/>
    <property type="project" value="UniProtKB-UniRule"/>
</dbReference>
<dbReference type="GO" id="GO:0006434">
    <property type="term" value="P:seryl-tRNA aminoacylation"/>
    <property type="evidence" value="ECO:0007669"/>
    <property type="project" value="UniProtKB-UniRule"/>
</dbReference>
<dbReference type="Gene3D" id="3.30.70.1920">
    <property type="match status" value="1"/>
</dbReference>
<dbReference type="Gene3D" id="3.30.930.10">
    <property type="entry name" value="Bira Bifunctional Protein, Domain 2"/>
    <property type="match status" value="1"/>
</dbReference>
<dbReference type="HAMAP" id="MF_01278">
    <property type="entry name" value="Ser_tRNA_synth_type2"/>
    <property type="match status" value="1"/>
</dbReference>
<dbReference type="InterPro" id="IPR002314">
    <property type="entry name" value="aa-tRNA-synt_IIb"/>
</dbReference>
<dbReference type="InterPro" id="IPR006195">
    <property type="entry name" value="aa-tRNA-synth_II"/>
</dbReference>
<dbReference type="InterPro" id="IPR045864">
    <property type="entry name" value="aa-tRNA-synth_II/BPL/LPL"/>
</dbReference>
<dbReference type="InterPro" id="IPR004503">
    <property type="entry name" value="Ser-tRNA-ligase_2_arc"/>
</dbReference>
<dbReference type="InterPro" id="IPR041293">
    <property type="entry name" value="SerS_tRNA-bd"/>
</dbReference>
<dbReference type="NCBIfam" id="NF002120">
    <property type="entry name" value="PRK00960.1"/>
    <property type="match status" value="1"/>
</dbReference>
<dbReference type="Pfam" id="PF00587">
    <property type="entry name" value="tRNA-synt_2b"/>
    <property type="match status" value="1"/>
</dbReference>
<dbReference type="Pfam" id="PF18490">
    <property type="entry name" value="tRNA_bind_4"/>
    <property type="match status" value="1"/>
</dbReference>
<dbReference type="SUPFAM" id="SSF55681">
    <property type="entry name" value="Class II aaRS and biotin synthetases"/>
    <property type="match status" value="1"/>
</dbReference>
<dbReference type="PROSITE" id="PS50862">
    <property type="entry name" value="AA_TRNA_LIGASE_II"/>
    <property type="match status" value="1"/>
</dbReference>
<name>SYS2_METTP</name>
<protein>
    <recommendedName>
        <fullName evidence="1">Type-2 serine--tRNA ligase</fullName>
        <ecNumber evidence="1">6.1.1.11</ecNumber>
    </recommendedName>
    <alternativeName>
        <fullName evidence="1">Seryl-tRNA synthetase</fullName>
        <shortName evidence="1">SerRS</shortName>
    </alternativeName>
    <alternativeName>
        <fullName evidence="1">Seryl-tRNA(Ser/Sec) synthetase</fullName>
    </alternativeName>
</protein>
<feature type="chain" id="PRO_0000286170" description="Type-2 serine--tRNA ligase">
    <location>
        <begin position="1"/>
        <end position="500"/>
    </location>
</feature>
<feature type="binding site" evidence="1">
    <location>
        <position position="305"/>
    </location>
    <ligand>
        <name>L-serine</name>
        <dbReference type="ChEBI" id="CHEBI:33384"/>
    </ligand>
</feature>
<feature type="binding site" evidence="1">
    <location>
        <position position="307"/>
    </location>
    <ligand>
        <name>Zn(2+)</name>
        <dbReference type="ChEBI" id="CHEBI:29105"/>
        <note>catalytic</note>
    </ligand>
</feature>
<feature type="binding site" evidence="1">
    <location>
        <begin position="337"/>
        <end position="339"/>
    </location>
    <ligand>
        <name>ATP</name>
        <dbReference type="ChEBI" id="CHEBI:30616"/>
    </ligand>
</feature>
<feature type="binding site" evidence="1">
    <location>
        <position position="337"/>
    </location>
    <ligand>
        <name>L-serine</name>
        <dbReference type="ChEBI" id="CHEBI:33384"/>
    </ligand>
</feature>
<feature type="binding site" evidence="1">
    <location>
        <begin position="348"/>
        <end position="349"/>
    </location>
    <ligand>
        <name>ATP</name>
        <dbReference type="ChEBI" id="CHEBI:30616"/>
    </ligand>
</feature>
<feature type="binding site" evidence="1">
    <location>
        <begin position="354"/>
        <end position="356"/>
    </location>
    <ligand>
        <name>L-serine</name>
        <dbReference type="ChEBI" id="CHEBI:33384"/>
    </ligand>
</feature>
<feature type="binding site" evidence="1">
    <location>
        <position position="356"/>
    </location>
    <ligand>
        <name>Zn(2+)</name>
        <dbReference type="ChEBI" id="CHEBI:29105"/>
        <note>catalytic</note>
    </ligand>
</feature>
<feature type="binding site" evidence="1">
    <location>
        <position position="401"/>
    </location>
    <ligand>
        <name>L-serine</name>
        <dbReference type="ChEBI" id="CHEBI:33384"/>
    </ligand>
</feature>
<feature type="binding site" evidence="1">
    <location>
        <position position="430"/>
    </location>
    <ligand>
        <name>ATP</name>
        <dbReference type="ChEBI" id="CHEBI:30616"/>
    </ligand>
</feature>
<feature type="binding site" evidence="1">
    <location>
        <position position="433"/>
    </location>
    <ligand>
        <name>L-serine</name>
        <dbReference type="ChEBI" id="CHEBI:33384"/>
    </ligand>
</feature>
<feature type="binding site" evidence="1">
    <location>
        <position position="459"/>
    </location>
    <ligand>
        <name>Zn(2+)</name>
        <dbReference type="ChEBI" id="CHEBI:29105"/>
        <note>catalytic</note>
    </ligand>
</feature>
<feature type="binding site" evidence="1">
    <location>
        <position position="466"/>
    </location>
    <ligand>
        <name>ATP</name>
        <dbReference type="ChEBI" id="CHEBI:30616"/>
    </ligand>
</feature>
<reference key="1">
    <citation type="submission" date="2006-10" db="EMBL/GenBank/DDBJ databases">
        <title>Complete sequence of Methanosaeta thermophila PT.</title>
        <authorList>
            <consortium name="US DOE Joint Genome Institute"/>
            <person name="Copeland A."/>
            <person name="Lucas S."/>
            <person name="Lapidus A."/>
            <person name="Barry K."/>
            <person name="Detter J.C."/>
            <person name="Glavina del Rio T."/>
            <person name="Hammon N."/>
            <person name="Israni S."/>
            <person name="Pitluck S."/>
            <person name="Chain P."/>
            <person name="Malfatti S."/>
            <person name="Shin M."/>
            <person name="Vergez L."/>
            <person name="Schmutz J."/>
            <person name="Larimer F."/>
            <person name="Land M."/>
            <person name="Hauser L."/>
            <person name="Kyrpides N."/>
            <person name="Kim E."/>
            <person name="Smith K.S."/>
            <person name="Ingram-Smith C."/>
            <person name="Richardson P."/>
        </authorList>
    </citation>
    <scope>NUCLEOTIDE SEQUENCE [LARGE SCALE GENOMIC DNA]</scope>
    <source>
        <strain>DSM 6194 / JCM 14653 / NBRC 101360 / PT</strain>
    </source>
</reference>
<organism>
    <name type="scientific">Methanothrix thermoacetophila (strain DSM 6194 / JCM 14653 / NBRC 101360 / PT)</name>
    <name type="common">Methanosaeta thermophila</name>
    <dbReference type="NCBI Taxonomy" id="349307"/>
    <lineage>
        <taxon>Archaea</taxon>
        <taxon>Methanobacteriati</taxon>
        <taxon>Methanobacteriota</taxon>
        <taxon>Stenosarchaea group</taxon>
        <taxon>Methanomicrobia</taxon>
        <taxon>Methanotrichales</taxon>
        <taxon>Methanotrichaceae</taxon>
        <taxon>Methanothrix</taxon>
    </lineage>
</organism>